<organism>
    <name type="scientific">Streptococcus pyogenes serotype M3 (strain ATCC BAA-595 / MGAS315)</name>
    <dbReference type="NCBI Taxonomy" id="198466"/>
    <lineage>
        <taxon>Bacteria</taxon>
        <taxon>Bacillati</taxon>
        <taxon>Bacillota</taxon>
        <taxon>Bacilli</taxon>
        <taxon>Lactobacillales</taxon>
        <taxon>Streptococcaceae</taxon>
        <taxon>Streptococcus</taxon>
    </lineage>
</organism>
<proteinExistence type="inferred from homology"/>
<sequence>MKVKLICVGKLKERYLKDGISEYQKRLSRFCQFEMIELTDERTPDKASFADNQLIMSKEAQRIHKKIGERDFVIALAIEGKQFPSETFSELISGVTVKGYSTITFIIGGSLGLDSIIKKRANMLMSFGLLTLPHQLMRLVLTEQIYRAFMITKGSPYHK</sequence>
<evidence type="ECO:0000255" key="1">
    <source>
        <dbReference type="HAMAP-Rule" id="MF_00658"/>
    </source>
</evidence>
<protein>
    <recommendedName>
        <fullName evidence="1">Ribosomal RNA large subunit methyltransferase H</fullName>
        <ecNumber evidence="1">2.1.1.177</ecNumber>
    </recommendedName>
    <alternativeName>
        <fullName evidence="1">23S rRNA (pseudouridine1915-N3)-methyltransferase</fullName>
    </alternativeName>
    <alternativeName>
        <fullName evidence="1">23S rRNA m3Psi1915 methyltransferase</fullName>
    </alternativeName>
    <alternativeName>
        <fullName evidence="1">rRNA (pseudouridine-N3-)-methyltransferase RlmH</fullName>
    </alternativeName>
</protein>
<reference key="1">
    <citation type="journal article" date="2002" name="Proc. Natl. Acad. Sci. U.S.A.">
        <title>Genome sequence of a serotype M3 strain of group A Streptococcus: phage-encoded toxins, the high-virulence phenotype, and clone emergence.</title>
        <authorList>
            <person name="Beres S.B."/>
            <person name="Sylva G.L."/>
            <person name="Barbian K.D."/>
            <person name="Lei B."/>
            <person name="Hoff J.S."/>
            <person name="Mammarella N.D."/>
            <person name="Liu M.-Y."/>
            <person name="Smoot J.C."/>
            <person name="Porcella S.F."/>
            <person name="Parkins L.D."/>
            <person name="Campbell D.S."/>
            <person name="Smith T.M."/>
            <person name="McCormick J.K."/>
            <person name="Leung D.Y.M."/>
            <person name="Schlievert P.M."/>
            <person name="Musser J.M."/>
        </authorList>
    </citation>
    <scope>NUCLEOTIDE SEQUENCE [LARGE SCALE GENOMIC DNA]</scope>
    <source>
        <strain>ATCC BAA-595 / MGAS315</strain>
    </source>
</reference>
<feature type="chain" id="PRO_0000198193" description="Ribosomal RNA large subunit methyltransferase H">
    <location>
        <begin position="1"/>
        <end position="159"/>
    </location>
</feature>
<feature type="binding site" evidence="1">
    <location>
        <position position="76"/>
    </location>
    <ligand>
        <name>S-adenosyl-L-methionine</name>
        <dbReference type="ChEBI" id="CHEBI:59789"/>
    </ligand>
</feature>
<feature type="binding site" evidence="1">
    <location>
        <position position="108"/>
    </location>
    <ligand>
        <name>S-adenosyl-L-methionine</name>
        <dbReference type="ChEBI" id="CHEBI:59789"/>
    </ligand>
</feature>
<feature type="binding site" evidence="1">
    <location>
        <begin position="127"/>
        <end position="132"/>
    </location>
    <ligand>
        <name>S-adenosyl-L-methionine</name>
        <dbReference type="ChEBI" id="CHEBI:59789"/>
    </ligand>
</feature>
<name>RLMH_STRP3</name>
<dbReference type="EC" id="2.1.1.177" evidence="1"/>
<dbReference type="EMBL" id="AE014074">
    <property type="protein sequence ID" value="AAM80470.1"/>
    <property type="molecule type" value="Genomic_DNA"/>
</dbReference>
<dbReference type="RefSeq" id="WP_002994924.1">
    <property type="nucleotide sequence ID" value="NC_004070.1"/>
</dbReference>
<dbReference type="SMR" id="P0DF08"/>
<dbReference type="KEGG" id="spg:SpyM3_1863"/>
<dbReference type="HOGENOM" id="CLU_100552_0_0_9"/>
<dbReference type="Proteomes" id="UP000000564">
    <property type="component" value="Chromosome"/>
</dbReference>
<dbReference type="GO" id="GO:0005737">
    <property type="term" value="C:cytoplasm"/>
    <property type="evidence" value="ECO:0007669"/>
    <property type="project" value="UniProtKB-SubCell"/>
</dbReference>
<dbReference type="GO" id="GO:0070038">
    <property type="term" value="F:rRNA (pseudouridine-N3-)-methyltransferase activity"/>
    <property type="evidence" value="ECO:0007669"/>
    <property type="project" value="UniProtKB-UniRule"/>
</dbReference>
<dbReference type="CDD" id="cd18081">
    <property type="entry name" value="RlmH-like"/>
    <property type="match status" value="1"/>
</dbReference>
<dbReference type="Gene3D" id="3.40.1280.10">
    <property type="match status" value="1"/>
</dbReference>
<dbReference type="HAMAP" id="MF_00658">
    <property type="entry name" value="23SrRNA_methyltr_H"/>
    <property type="match status" value="1"/>
</dbReference>
<dbReference type="InterPro" id="IPR029028">
    <property type="entry name" value="Alpha/beta_knot_MTases"/>
</dbReference>
<dbReference type="InterPro" id="IPR003742">
    <property type="entry name" value="RlmH-like"/>
</dbReference>
<dbReference type="InterPro" id="IPR029026">
    <property type="entry name" value="tRNA_m1G_MTases_N"/>
</dbReference>
<dbReference type="NCBIfam" id="NF000985">
    <property type="entry name" value="PRK00103.1-3"/>
    <property type="match status" value="1"/>
</dbReference>
<dbReference type="NCBIfam" id="TIGR00246">
    <property type="entry name" value="tRNA_RlmH_YbeA"/>
    <property type="match status" value="1"/>
</dbReference>
<dbReference type="PANTHER" id="PTHR33603">
    <property type="entry name" value="METHYLTRANSFERASE"/>
    <property type="match status" value="1"/>
</dbReference>
<dbReference type="PANTHER" id="PTHR33603:SF1">
    <property type="entry name" value="RIBOSOMAL RNA LARGE SUBUNIT METHYLTRANSFERASE H"/>
    <property type="match status" value="1"/>
</dbReference>
<dbReference type="Pfam" id="PF02590">
    <property type="entry name" value="SPOUT_MTase"/>
    <property type="match status" value="1"/>
</dbReference>
<dbReference type="PIRSF" id="PIRSF004505">
    <property type="entry name" value="MT_bac"/>
    <property type="match status" value="1"/>
</dbReference>
<dbReference type="SUPFAM" id="SSF75217">
    <property type="entry name" value="alpha/beta knot"/>
    <property type="match status" value="1"/>
</dbReference>
<accession>P0DF08</accession>
<accession>Q8K5F8</accession>
<comment type="function">
    <text evidence="1">Specifically methylates the pseudouridine at position 1915 (m3Psi1915) in 23S rRNA.</text>
</comment>
<comment type="catalytic activity">
    <reaction evidence="1">
        <text>pseudouridine(1915) in 23S rRNA + S-adenosyl-L-methionine = N(3)-methylpseudouridine(1915) in 23S rRNA + S-adenosyl-L-homocysteine + H(+)</text>
        <dbReference type="Rhea" id="RHEA:42752"/>
        <dbReference type="Rhea" id="RHEA-COMP:10221"/>
        <dbReference type="Rhea" id="RHEA-COMP:10222"/>
        <dbReference type="ChEBI" id="CHEBI:15378"/>
        <dbReference type="ChEBI" id="CHEBI:57856"/>
        <dbReference type="ChEBI" id="CHEBI:59789"/>
        <dbReference type="ChEBI" id="CHEBI:65314"/>
        <dbReference type="ChEBI" id="CHEBI:74486"/>
        <dbReference type="EC" id="2.1.1.177"/>
    </reaction>
</comment>
<comment type="subunit">
    <text evidence="1">Homodimer.</text>
</comment>
<comment type="subcellular location">
    <subcellularLocation>
        <location evidence="1">Cytoplasm</location>
    </subcellularLocation>
</comment>
<comment type="similarity">
    <text evidence="1">Belongs to the RNA methyltransferase RlmH family.</text>
</comment>
<keyword id="KW-0963">Cytoplasm</keyword>
<keyword id="KW-0489">Methyltransferase</keyword>
<keyword id="KW-0698">rRNA processing</keyword>
<keyword id="KW-0949">S-adenosyl-L-methionine</keyword>
<keyword id="KW-0808">Transferase</keyword>
<gene>
    <name evidence="1" type="primary">rlmH</name>
    <name type="ordered locus">SpyM3_1863</name>
</gene>